<reference key="1">
    <citation type="journal article" date="2006" name="Proc. Natl. Acad. Sci. U.S.A.">
        <title>Genome reduction in Leptospira borgpetersenii reflects limited transmission potential.</title>
        <authorList>
            <person name="Bulach D.M."/>
            <person name="Zuerner R.L."/>
            <person name="Wilson P."/>
            <person name="Seemann T."/>
            <person name="McGrath A."/>
            <person name="Cullen P.A."/>
            <person name="Davis J."/>
            <person name="Johnson M."/>
            <person name="Kuczek E."/>
            <person name="Alt D.P."/>
            <person name="Peterson-Burch B."/>
            <person name="Coppel R.L."/>
            <person name="Rood J.I."/>
            <person name="Davies J.K."/>
            <person name="Adler B."/>
        </authorList>
    </citation>
    <scope>NUCLEOTIDE SEQUENCE [LARGE SCALE GENOMIC DNA]</scope>
    <source>
        <strain>L550</strain>
    </source>
</reference>
<protein>
    <recommendedName>
        <fullName evidence="1">RNA-binding protein Hfq</fullName>
    </recommendedName>
</protein>
<gene>
    <name evidence="1" type="primary">hfq</name>
    <name type="ordered locus">LBL_1921</name>
</gene>
<comment type="function">
    <text evidence="1">RNA chaperone that binds small regulatory RNA (sRNAs) and mRNAs to facilitate mRNA translational regulation in response to envelope stress, environmental stress and changes in metabolite concentrations. Also binds with high specificity to tRNAs.</text>
</comment>
<comment type="subunit">
    <text evidence="1">Homohexamer.</text>
</comment>
<comment type="similarity">
    <text evidence="1">Belongs to the Hfq family.</text>
</comment>
<sequence>MSAKNNIQDQLLNTARKDKLDLTIYLLNGVPLKGKVVSFDNFTIVLEQENKQSLVYKHAISTIIPAKIIKLYTEETKDAVQG</sequence>
<evidence type="ECO:0000255" key="1">
    <source>
        <dbReference type="HAMAP-Rule" id="MF_00436"/>
    </source>
</evidence>
<evidence type="ECO:0000255" key="2">
    <source>
        <dbReference type="PROSITE-ProRule" id="PRU01346"/>
    </source>
</evidence>
<keyword id="KW-0694">RNA-binding</keyword>
<keyword id="KW-0346">Stress response</keyword>
<accession>Q04ZZ4</accession>
<organism>
    <name type="scientific">Leptospira borgpetersenii serovar Hardjo-bovis (strain L550)</name>
    <dbReference type="NCBI Taxonomy" id="355276"/>
    <lineage>
        <taxon>Bacteria</taxon>
        <taxon>Pseudomonadati</taxon>
        <taxon>Spirochaetota</taxon>
        <taxon>Spirochaetia</taxon>
        <taxon>Leptospirales</taxon>
        <taxon>Leptospiraceae</taxon>
        <taxon>Leptospira</taxon>
    </lineage>
</organism>
<dbReference type="EMBL" id="CP000348">
    <property type="protein sequence ID" value="ABJ79351.1"/>
    <property type="molecule type" value="Genomic_DNA"/>
</dbReference>
<dbReference type="RefSeq" id="WP_002632842.1">
    <property type="nucleotide sequence ID" value="NC_008508.1"/>
</dbReference>
<dbReference type="SMR" id="Q04ZZ4"/>
<dbReference type="GeneID" id="61174584"/>
<dbReference type="KEGG" id="lbl:LBL_1921"/>
<dbReference type="HOGENOM" id="CLU_113688_0_2_12"/>
<dbReference type="GO" id="GO:0005829">
    <property type="term" value="C:cytosol"/>
    <property type="evidence" value="ECO:0007669"/>
    <property type="project" value="TreeGrafter"/>
</dbReference>
<dbReference type="GO" id="GO:0003723">
    <property type="term" value="F:RNA binding"/>
    <property type="evidence" value="ECO:0007669"/>
    <property type="project" value="UniProtKB-UniRule"/>
</dbReference>
<dbReference type="GO" id="GO:0006355">
    <property type="term" value="P:regulation of DNA-templated transcription"/>
    <property type="evidence" value="ECO:0007669"/>
    <property type="project" value="InterPro"/>
</dbReference>
<dbReference type="GO" id="GO:0043487">
    <property type="term" value="P:regulation of RNA stability"/>
    <property type="evidence" value="ECO:0007669"/>
    <property type="project" value="TreeGrafter"/>
</dbReference>
<dbReference type="GO" id="GO:0045974">
    <property type="term" value="P:regulation of translation, ncRNA-mediated"/>
    <property type="evidence" value="ECO:0007669"/>
    <property type="project" value="TreeGrafter"/>
</dbReference>
<dbReference type="CDD" id="cd01716">
    <property type="entry name" value="Hfq"/>
    <property type="match status" value="1"/>
</dbReference>
<dbReference type="FunFam" id="2.30.30.100:FF:000046">
    <property type="entry name" value="RNA-binding protein Hfq"/>
    <property type="match status" value="1"/>
</dbReference>
<dbReference type="Gene3D" id="2.30.30.100">
    <property type="match status" value="1"/>
</dbReference>
<dbReference type="HAMAP" id="MF_00436">
    <property type="entry name" value="Hfq"/>
    <property type="match status" value="1"/>
</dbReference>
<dbReference type="InterPro" id="IPR005001">
    <property type="entry name" value="Hfq"/>
</dbReference>
<dbReference type="InterPro" id="IPR010920">
    <property type="entry name" value="LSM_dom_sf"/>
</dbReference>
<dbReference type="InterPro" id="IPR047575">
    <property type="entry name" value="Sm"/>
</dbReference>
<dbReference type="NCBIfam" id="TIGR02383">
    <property type="entry name" value="Hfq"/>
    <property type="match status" value="1"/>
</dbReference>
<dbReference type="NCBIfam" id="NF001602">
    <property type="entry name" value="PRK00395.1"/>
    <property type="match status" value="1"/>
</dbReference>
<dbReference type="PANTHER" id="PTHR34772">
    <property type="entry name" value="RNA-BINDING PROTEIN HFQ"/>
    <property type="match status" value="1"/>
</dbReference>
<dbReference type="PANTHER" id="PTHR34772:SF1">
    <property type="entry name" value="RNA-BINDING PROTEIN HFQ"/>
    <property type="match status" value="1"/>
</dbReference>
<dbReference type="Pfam" id="PF17209">
    <property type="entry name" value="Hfq"/>
    <property type="match status" value="1"/>
</dbReference>
<dbReference type="SUPFAM" id="SSF50182">
    <property type="entry name" value="Sm-like ribonucleoproteins"/>
    <property type="match status" value="1"/>
</dbReference>
<dbReference type="PROSITE" id="PS52002">
    <property type="entry name" value="SM"/>
    <property type="match status" value="1"/>
</dbReference>
<name>HFQ_LEPBL</name>
<feature type="chain" id="PRO_1000025919" description="RNA-binding protein Hfq">
    <location>
        <begin position="1"/>
        <end position="82"/>
    </location>
</feature>
<feature type="domain" description="Sm" evidence="2">
    <location>
        <begin position="9"/>
        <end position="69"/>
    </location>
</feature>
<proteinExistence type="inferred from homology"/>